<dbReference type="EMBL" id="AE000657">
    <property type="protein sequence ID" value="AAC07024.1"/>
    <property type="molecule type" value="Genomic_DNA"/>
</dbReference>
<dbReference type="PIR" id="E70379">
    <property type="entry name" value="E70379"/>
</dbReference>
<dbReference type="RefSeq" id="NP_213626.1">
    <property type="nucleotide sequence ID" value="NC_000918.1"/>
</dbReference>
<dbReference type="STRING" id="224324.aq_919"/>
<dbReference type="EnsemblBacteria" id="AAC07024">
    <property type="protein sequence ID" value="AAC07024"/>
    <property type="gene ID" value="aq_919"/>
</dbReference>
<dbReference type="KEGG" id="aae:aq_919"/>
<dbReference type="HOGENOM" id="CLU_1852472_0_0_0"/>
<dbReference type="InParanoid" id="O67064"/>
<dbReference type="OrthoDB" id="13857at2"/>
<dbReference type="Proteomes" id="UP000000798">
    <property type="component" value="Chromosome"/>
</dbReference>
<protein>
    <recommendedName>
        <fullName>Uncharacterized protein aq_919</fullName>
    </recommendedName>
</protein>
<organism>
    <name type="scientific">Aquifex aeolicus (strain VF5)</name>
    <dbReference type="NCBI Taxonomy" id="224324"/>
    <lineage>
        <taxon>Bacteria</taxon>
        <taxon>Pseudomonadati</taxon>
        <taxon>Aquificota</taxon>
        <taxon>Aquificia</taxon>
        <taxon>Aquificales</taxon>
        <taxon>Aquificaceae</taxon>
        <taxon>Aquifex</taxon>
    </lineage>
</organism>
<sequence>MSKYSFINIHLKRRFKRLEYLSMEKTVTFLLNPLKNNKVWAVLMPDGELMDDIVSVKRAQTCMEENEQIWVNPFGGAYMWDTKVSEPYEAEFVLFKKEAVQYMCIFNLHEADLQYIDYSPISGELLFDEEELKKKLDEKTLNEFKIFMNELWGYIKEVS</sequence>
<keyword id="KW-1185">Reference proteome</keyword>
<feature type="chain" id="PRO_0000186889" description="Uncharacterized protein aq_919">
    <location>
        <begin position="1"/>
        <end position="159"/>
    </location>
</feature>
<gene>
    <name type="ordered locus">aq_919</name>
</gene>
<proteinExistence type="predicted"/>
<accession>O67064</accession>
<name>Y919_AQUAE</name>
<reference key="1">
    <citation type="journal article" date="1998" name="Nature">
        <title>The complete genome of the hyperthermophilic bacterium Aquifex aeolicus.</title>
        <authorList>
            <person name="Deckert G."/>
            <person name="Warren P.V."/>
            <person name="Gaasterland T."/>
            <person name="Young W.G."/>
            <person name="Lenox A.L."/>
            <person name="Graham D.E."/>
            <person name="Overbeek R."/>
            <person name="Snead M.A."/>
            <person name="Keller M."/>
            <person name="Aujay M."/>
            <person name="Huber R."/>
            <person name="Feldman R.A."/>
            <person name="Short J.M."/>
            <person name="Olsen G.J."/>
            <person name="Swanson R.V."/>
        </authorList>
    </citation>
    <scope>NUCLEOTIDE SEQUENCE [LARGE SCALE GENOMIC DNA]</scope>
    <source>
        <strain>VF5</strain>
    </source>
</reference>